<sequence>MTTPLLGQSAEELRIWVESQGQPAYRAQQLHRWLYQRGVRSLMEITDWPKAWREQVHSVPVGRSQVVRQSAAADGTIKYLLAGADGETVETVGIPAAERLTVCVSSQVGCPMACRFCATGQSGFARNLGVHEIVDQVLTVQEGFGRRVSHVVFMGMGEPLLNLGAVVQALRVLNGDIGIGQRQITVSTVGVPGQIRRLGTYKLQITLAVSLHAPNQDLRLKLIPTAQHYPIEELLEDCRDYVETTNRRVSFEYTLLAGINDEPHHARELAAILRGFQSHVNLIPYNPIEGVEYERPGEARVRAFERELVRHKIAASVRHTRGLEEAAACGQLRRRSLSGEAQSASTRA</sequence>
<keyword id="KW-0004">4Fe-4S</keyword>
<keyword id="KW-0963">Cytoplasm</keyword>
<keyword id="KW-1015">Disulfide bond</keyword>
<keyword id="KW-0408">Iron</keyword>
<keyword id="KW-0411">Iron-sulfur</keyword>
<keyword id="KW-0479">Metal-binding</keyword>
<keyword id="KW-0489">Methyltransferase</keyword>
<keyword id="KW-1185">Reference proteome</keyword>
<keyword id="KW-0698">rRNA processing</keyword>
<keyword id="KW-0949">S-adenosyl-L-methionine</keyword>
<keyword id="KW-0808">Transferase</keyword>
<keyword id="KW-0819">tRNA processing</keyword>
<evidence type="ECO:0000255" key="1">
    <source>
        <dbReference type="HAMAP-Rule" id="MF_01849"/>
    </source>
</evidence>
<evidence type="ECO:0000255" key="2">
    <source>
        <dbReference type="PROSITE-ProRule" id="PRU01266"/>
    </source>
</evidence>
<comment type="function">
    <text evidence="1">Specifically methylates position 2 of adenine 2503 in 23S rRNA and position 2 of adenine 37 in tRNAs.</text>
</comment>
<comment type="catalytic activity">
    <reaction evidence="1">
        <text>adenosine(2503) in 23S rRNA + 2 reduced [2Fe-2S]-[ferredoxin] + 2 S-adenosyl-L-methionine = 2-methyladenosine(2503) in 23S rRNA + 5'-deoxyadenosine + L-methionine + 2 oxidized [2Fe-2S]-[ferredoxin] + S-adenosyl-L-homocysteine</text>
        <dbReference type="Rhea" id="RHEA:42916"/>
        <dbReference type="Rhea" id="RHEA-COMP:10000"/>
        <dbReference type="Rhea" id="RHEA-COMP:10001"/>
        <dbReference type="Rhea" id="RHEA-COMP:10152"/>
        <dbReference type="Rhea" id="RHEA-COMP:10282"/>
        <dbReference type="ChEBI" id="CHEBI:17319"/>
        <dbReference type="ChEBI" id="CHEBI:33737"/>
        <dbReference type="ChEBI" id="CHEBI:33738"/>
        <dbReference type="ChEBI" id="CHEBI:57844"/>
        <dbReference type="ChEBI" id="CHEBI:57856"/>
        <dbReference type="ChEBI" id="CHEBI:59789"/>
        <dbReference type="ChEBI" id="CHEBI:74411"/>
        <dbReference type="ChEBI" id="CHEBI:74497"/>
        <dbReference type="EC" id="2.1.1.192"/>
    </reaction>
</comment>
<comment type="catalytic activity">
    <reaction evidence="1">
        <text>adenosine(37) in tRNA + 2 reduced [2Fe-2S]-[ferredoxin] + 2 S-adenosyl-L-methionine = 2-methyladenosine(37) in tRNA + 5'-deoxyadenosine + L-methionine + 2 oxidized [2Fe-2S]-[ferredoxin] + S-adenosyl-L-homocysteine</text>
        <dbReference type="Rhea" id="RHEA:43332"/>
        <dbReference type="Rhea" id="RHEA-COMP:10000"/>
        <dbReference type="Rhea" id="RHEA-COMP:10001"/>
        <dbReference type="Rhea" id="RHEA-COMP:10162"/>
        <dbReference type="Rhea" id="RHEA-COMP:10485"/>
        <dbReference type="ChEBI" id="CHEBI:17319"/>
        <dbReference type="ChEBI" id="CHEBI:33737"/>
        <dbReference type="ChEBI" id="CHEBI:33738"/>
        <dbReference type="ChEBI" id="CHEBI:57844"/>
        <dbReference type="ChEBI" id="CHEBI:57856"/>
        <dbReference type="ChEBI" id="CHEBI:59789"/>
        <dbReference type="ChEBI" id="CHEBI:74411"/>
        <dbReference type="ChEBI" id="CHEBI:74497"/>
        <dbReference type="EC" id="2.1.1.192"/>
    </reaction>
</comment>
<comment type="cofactor">
    <cofactor evidence="1">
        <name>[4Fe-4S] cluster</name>
        <dbReference type="ChEBI" id="CHEBI:49883"/>
    </cofactor>
    <text evidence="1">Binds 1 [4Fe-4S] cluster. The cluster is coordinated with 3 cysteines and an exchangeable S-adenosyl-L-methionine.</text>
</comment>
<comment type="subcellular location">
    <subcellularLocation>
        <location evidence="1">Cytoplasm</location>
    </subcellularLocation>
</comment>
<comment type="miscellaneous">
    <text evidence="1">Reaction proceeds by a ping-pong mechanism involving intermediate methylation of a conserved cysteine residue.</text>
</comment>
<comment type="similarity">
    <text evidence="1">Belongs to the radical SAM superfamily. RlmN family.</text>
</comment>
<reference key="1">
    <citation type="journal article" date="2003" name="DNA Res.">
        <title>Complete genome structure of Gloeobacter violaceus PCC 7421, a cyanobacterium that lacks thylakoids.</title>
        <authorList>
            <person name="Nakamura Y."/>
            <person name="Kaneko T."/>
            <person name="Sato S."/>
            <person name="Mimuro M."/>
            <person name="Miyashita H."/>
            <person name="Tsuchiya T."/>
            <person name="Sasamoto S."/>
            <person name="Watanabe A."/>
            <person name="Kawashima K."/>
            <person name="Kishida Y."/>
            <person name="Kiyokawa C."/>
            <person name="Kohara M."/>
            <person name="Matsumoto M."/>
            <person name="Matsuno A."/>
            <person name="Nakazaki N."/>
            <person name="Shimpo S."/>
            <person name="Takeuchi C."/>
            <person name="Yamada M."/>
            <person name="Tabata S."/>
        </authorList>
    </citation>
    <scope>NUCLEOTIDE SEQUENCE [LARGE SCALE GENOMIC DNA]</scope>
    <source>
        <strain>ATCC 29082 / PCC 7421</strain>
    </source>
</reference>
<gene>
    <name evidence="1" type="primary">rlmN</name>
    <name type="ordered locus">gll2079</name>
</gene>
<dbReference type="EC" id="2.1.1.192" evidence="1"/>
<dbReference type="EMBL" id="BA000045">
    <property type="protein sequence ID" value="BAC90020.1"/>
    <property type="molecule type" value="Genomic_DNA"/>
</dbReference>
<dbReference type="RefSeq" id="NP_925025.1">
    <property type="nucleotide sequence ID" value="NC_005125.1"/>
</dbReference>
<dbReference type="RefSeq" id="WP_011142077.1">
    <property type="nucleotide sequence ID" value="NC_005125.1"/>
</dbReference>
<dbReference type="SMR" id="Q7NIV3"/>
<dbReference type="FunCoup" id="Q7NIV3">
    <property type="interactions" value="223"/>
</dbReference>
<dbReference type="STRING" id="251221.gene:10759572"/>
<dbReference type="EnsemblBacteria" id="BAC90020">
    <property type="protein sequence ID" value="BAC90020"/>
    <property type="gene ID" value="BAC90020"/>
</dbReference>
<dbReference type="KEGG" id="gvi:gll2079"/>
<dbReference type="PATRIC" id="fig|251221.4.peg.2114"/>
<dbReference type="eggNOG" id="COG0820">
    <property type="taxonomic scope" value="Bacteria"/>
</dbReference>
<dbReference type="HOGENOM" id="CLU_029101_1_1_3"/>
<dbReference type="InParanoid" id="Q7NIV3"/>
<dbReference type="OrthoDB" id="9793973at2"/>
<dbReference type="PhylomeDB" id="Q7NIV3"/>
<dbReference type="Proteomes" id="UP000000557">
    <property type="component" value="Chromosome"/>
</dbReference>
<dbReference type="GO" id="GO:0005737">
    <property type="term" value="C:cytoplasm"/>
    <property type="evidence" value="ECO:0007669"/>
    <property type="project" value="UniProtKB-SubCell"/>
</dbReference>
<dbReference type="GO" id="GO:0051539">
    <property type="term" value="F:4 iron, 4 sulfur cluster binding"/>
    <property type="evidence" value="ECO:0007669"/>
    <property type="project" value="UniProtKB-UniRule"/>
</dbReference>
<dbReference type="GO" id="GO:0046872">
    <property type="term" value="F:metal ion binding"/>
    <property type="evidence" value="ECO:0007669"/>
    <property type="project" value="UniProtKB-KW"/>
</dbReference>
<dbReference type="GO" id="GO:0070040">
    <property type="term" value="F:rRNA (adenine(2503)-C2-)-methyltransferase activity"/>
    <property type="evidence" value="ECO:0007669"/>
    <property type="project" value="UniProtKB-UniRule"/>
</dbReference>
<dbReference type="GO" id="GO:0019843">
    <property type="term" value="F:rRNA binding"/>
    <property type="evidence" value="ECO:0007669"/>
    <property type="project" value="UniProtKB-UniRule"/>
</dbReference>
<dbReference type="GO" id="GO:0002935">
    <property type="term" value="F:tRNA (adenine(37)-C2)-methyltransferase activity"/>
    <property type="evidence" value="ECO:0007669"/>
    <property type="project" value="UniProtKB-UniRule"/>
</dbReference>
<dbReference type="GO" id="GO:0000049">
    <property type="term" value="F:tRNA binding"/>
    <property type="evidence" value="ECO:0007669"/>
    <property type="project" value="UniProtKB-UniRule"/>
</dbReference>
<dbReference type="GO" id="GO:0070475">
    <property type="term" value="P:rRNA base methylation"/>
    <property type="evidence" value="ECO:0000318"/>
    <property type="project" value="GO_Central"/>
</dbReference>
<dbReference type="GO" id="GO:0030488">
    <property type="term" value="P:tRNA methylation"/>
    <property type="evidence" value="ECO:0000318"/>
    <property type="project" value="GO_Central"/>
</dbReference>
<dbReference type="CDD" id="cd01335">
    <property type="entry name" value="Radical_SAM"/>
    <property type="match status" value="1"/>
</dbReference>
<dbReference type="FunFam" id="3.20.20.70:FF:000014">
    <property type="entry name" value="Probable dual-specificity RNA methyltransferase RlmN"/>
    <property type="match status" value="1"/>
</dbReference>
<dbReference type="Gene3D" id="1.10.150.530">
    <property type="match status" value="1"/>
</dbReference>
<dbReference type="Gene3D" id="3.20.20.70">
    <property type="entry name" value="Aldolase class I"/>
    <property type="match status" value="1"/>
</dbReference>
<dbReference type="HAMAP" id="MF_01849">
    <property type="entry name" value="RNA_methyltr_RlmN"/>
    <property type="match status" value="1"/>
</dbReference>
<dbReference type="InterPro" id="IPR013785">
    <property type="entry name" value="Aldolase_TIM"/>
</dbReference>
<dbReference type="InterPro" id="IPR006638">
    <property type="entry name" value="Elp3/MiaA/NifB-like_rSAM"/>
</dbReference>
<dbReference type="InterPro" id="IPR040072">
    <property type="entry name" value="Methyltransferase_A"/>
</dbReference>
<dbReference type="InterPro" id="IPR048641">
    <property type="entry name" value="RlmN_N"/>
</dbReference>
<dbReference type="InterPro" id="IPR027492">
    <property type="entry name" value="RNA_MTrfase_RlmN"/>
</dbReference>
<dbReference type="InterPro" id="IPR004383">
    <property type="entry name" value="rRNA_lsu_MTrfase_RlmN/Cfr"/>
</dbReference>
<dbReference type="InterPro" id="IPR007197">
    <property type="entry name" value="rSAM"/>
</dbReference>
<dbReference type="NCBIfam" id="TIGR00048">
    <property type="entry name" value="rRNA_mod_RlmN"/>
    <property type="match status" value="1"/>
</dbReference>
<dbReference type="PANTHER" id="PTHR30544">
    <property type="entry name" value="23S RRNA METHYLTRANSFERASE"/>
    <property type="match status" value="1"/>
</dbReference>
<dbReference type="PANTHER" id="PTHR30544:SF5">
    <property type="entry name" value="RADICAL SAM CORE DOMAIN-CONTAINING PROTEIN"/>
    <property type="match status" value="1"/>
</dbReference>
<dbReference type="Pfam" id="PF04055">
    <property type="entry name" value="Radical_SAM"/>
    <property type="match status" value="1"/>
</dbReference>
<dbReference type="Pfam" id="PF21016">
    <property type="entry name" value="RlmN_N"/>
    <property type="match status" value="1"/>
</dbReference>
<dbReference type="PIRSF" id="PIRSF006004">
    <property type="entry name" value="CHP00048"/>
    <property type="match status" value="1"/>
</dbReference>
<dbReference type="SFLD" id="SFLDF00275">
    <property type="entry name" value="adenosine_C2_methyltransferase"/>
    <property type="match status" value="1"/>
</dbReference>
<dbReference type="SFLD" id="SFLDS00029">
    <property type="entry name" value="Radical_SAM"/>
    <property type="match status" value="1"/>
</dbReference>
<dbReference type="SMART" id="SM00729">
    <property type="entry name" value="Elp3"/>
    <property type="match status" value="1"/>
</dbReference>
<dbReference type="SUPFAM" id="SSF102114">
    <property type="entry name" value="Radical SAM enzymes"/>
    <property type="match status" value="1"/>
</dbReference>
<dbReference type="PROSITE" id="PS51918">
    <property type="entry name" value="RADICAL_SAM"/>
    <property type="match status" value="1"/>
</dbReference>
<feature type="chain" id="PRO_0000350197" description="Probable dual-specificity RNA methyltransferase RlmN">
    <location>
        <begin position="1"/>
        <end position="348"/>
    </location>
</feature>
<feature type="domain" description="Radical SAM core" evidence="2">
    <location>
        <begin position="96"/>
        <end position="324"/>
    </location>
</feature>
<feature type="active site" description="Proton acceptor" evidence="1">
    <location>
        <position position="90"/>
    </location>
</feature>
<feature type="active site" description="S-methylcysteine intermediate" evidence="1">
    <location>
        <position position="329"/>
    </location>
</feature>
<feature type="binding site" evidence="1">
    <location>
        <position position="110"/>
    </location>
    <ligand>
        <name>[4Fe-4S] cluster</name>
        <dbReference type="ChEBI" id="CHEBI:49883"/>
        <note>4Fe-4S-S-AdoMet</note>
    </ligand>
</feature>
<feature type="binding site" evidence="1">
    <location>
        <position position="114"/>
    </location>
    <ligand>
        <name>[4Fe-4S] cluster</name>
        <dbReference type="ChEBI" id="CHEBI:49883"/>
        <note>4Fe-4S-S-AdoMet</note>
    </ligand>
</feature>
<feature type="binding site" evidence="1">
    <location>
        <position position="117"/>
    </location>
    <ligand>
        <name>[4Fe-4S] cluster</name>
        <dbReference type="ChEBI" id="CHEBI:49883"/>
        <note>4Fe-4S-S-AdoMet</note>
    </ligand>
</feature>
<feature type="binding site" evidence="1">
    <location>
        <begin position="157"/>
        <end position="158"/>
    </location>
    <ligand>
        <name>S-adenosyl-L-methionine</name>
        <dbReference type="ChEBI" id="CHEBI:59789"/>
    </ligand>
</feature>
<feature type="binding site" evidence="1">
    <location>
        <position position="187"/>
    </location>
    <ligand>
        <name>S-adenosyl-L-methionine</name>
        <dbReference type="ChEBI" id="CHEBI:59789"/>
    </ligand>
</feature>
<feature type="binding site" evidence="1">
    <location>
        <begin position="210"/>
        <end position="212"/>
    </location>
    <ligand>
        <name>S-adenosyl-L-methionine</name>
        <dbReference type="ChEBI" id="CHEBI:59789"/>
    </ligand>
</feature>
<feature type="binding site" evidence="1">
    <location>
        <position position="286"/>
    </location>
    <ligand>
        <name>S-adenosyl-L-methionine</name>
        <dbReference type="ChEBI" id="CHEBI:59789"/>
    </ligand>
</feature>
<feature type="disulfide bond" description="(transient)" evidence="1">
    <location>
        <begin position="103"/>
        <end position="329"/>
    </location>
</feature>
<protein>
    <recommendedName>
        <fullName evidence="1">Probable dual-specificity RNA methyltransferase RlmN</fullName>
        <ecNumber evidence="1">2.1.1.192</ecNumber>
    </recommendedName>
    <alternativeName>
        <fullName evidence="1">23S rRNA (adenine(2503)-C(2))-methyltransferase</fullName>
    </alternativeName>
    <alternativeName>
        <fullName evidence="1">23S rRNA m2A2503 methyltransferase</fullName>
    </alternativeName>
    <alternativeName>
        <fullName evidence="1">Ribosomal RNA large subunit methyltransferase N</fullName>
    </alternativeName>
    <alternativeName>
        <fullName evidence="1">tRNA (adenine(37)-C(2))-methyltransferase</fullName>
    </alternativeName>
    <alternativeName>
        <fullName evidence="1">tRNA m2A37 methyltransferase</fullName>
    </alternativeName>
</protein>
<organism>
    <name type="scientific">Gloeobacter violaceus (strain ATCC 29082 / PCC 7421)</name>
    <dbReference type="NCBI Taxonomy" id="251221"/>
    <lineage>
        <taxon>Bacteria</taxon>
        <taxon>Bacillati</taxon>
        <taxon>Cyanobacteriota</taxon>
        <taxon>Cyanophyceae</taxon>
        <taxon>Gloeobacterales</taxon>
        <taxon>Gloeobacteraceae</taxon>
        <taxon>Gloeobacter</taxon>
    </lineage>
</organism>
<proteinExistence type="inferred from homology"/>
<name>RLMN_GLOVI</name>
<accession>Q7NIV3</accession>